<evidence type="ECO:0000255" key="1">
    <source>
        <dbReference type="HAMAP-Rule" id="MF_00059"/>
    </source>
</evidence>
<organism>
    <name type="scientific">Thioalkalivibrio sulfidiphilus (strain HL-EbGR7)</name>
    <dbReference type="NCBI Taxonomy" id="396588"/>
    <lineage>
        <taxon>Bacteria</taxon>
        <taxon>Pseudomonadati</taxon>
        <taxon>Pseudomonadota</taxon>
        <taxon>Gammaproteobacteria</taxon>
        <taxon>Chromatiales</taxon>
        <taxon>Ectothiorhodospiraceae</taxon>
        <taxon>Thioalkalivibrio</taxon>
    </lineage>
</organism>
<feature type="chain" id="PRO_1000196648" description="DNA-directed RNA polymerase subunit alpha">
    <location>
        <begin position="1"/>
        <end position="334"/>
    </location>
</feature>
<feature type="region of interest" description="Alpha N-terminal domain (alpha-NTD)" evidence="1">
    <location>
        <begin position="1"/>
        <end position="234"/>
    </location>
</feature>
<feature type="region of interest" description="Alpha C-terminal domain (alpha-CTD)" evidence="1">
    <location>
        <begin position="248"/>
        <end position="334"/>
    </location>
</feature>
<accession>B8GV33</accession>
<proteinExistence type="inferred from homology"/>
<sequence length="334" mass="36856">MQTKVNELLKPRHIEVTSVSDRQAKVVLEPLERGFGHTLGNALRRILLSSIPGAAVVEAEIEGVLHEYTSIEGVQEDVVDILLNLKGIALRMHNRDEATLTLKKKGPGVVTAGDITLDHDVEIVNPEHVIAHLTKNGELSMSLKLGRGRGYQPVTARRSSESEDRPIGRLMLDASFSPIRRVAYKVESARVEQRTDMDRLVIELETNGTVEADDAIRQAAGILQSQLAAFVELQGDESTVTESKQMEIDPILLRPVDDLELTVRSANCLKAENIYYIGDLIQRTEVELLKTPNLGKKSLTEIKDVLASHGLSMGMRLENWPPPGLKDQDKKASG</sequence>
<dbReference type="EC" id="2.7.7.6" evidence="1"/>
<dbReference type="EMBL" id="CP001339">
    <property type="protein sequence ID" value="ACL73379.1"/>
    <property type="molecule type" value="Genomic_DNA"/>
</dbReference>
<dbReference type="RefSeq" id="WP_012638855.1">
    <property type="nucleotide sequence ID" value="NC_011901.1"/>
</dbReference>
<dbReference type="SMR" id="B8GV33"/>
<dbReference type="STRING" id="396588.Tgr7_2299"/>
<dbReference type="KEGG" id="tgr:Tgr7_2299"/>
<dbReference type="eggNOG" id="COG0202">
    <property type="taxonomic scope" value="Bacteria"/>
</dbReference>
<dbReference type="HOGENOM" id="CLU_053084_0_0_6"/>
<dbReference type="OrthoDB" id="9805706at2"/>
<dbReference type="Proteomes" id="UP000002383">
    <property type="component" value="Chromosome"/>
</dbReference>
<dbReference type="GO" id="GO:0005737">
    <property type="term" value="C:cytoplasm"/>
    <property type="evidence" value="ECO:0007669"/>
    <property type="project" value="UniProtKB-ARBA"/>
</dbReference>
<dbReference type="GO" id="GO:0000428">
    <property type="term" value="C:DNA-directed RNA polymerase complex"/>
    <property type="evidence" value="ECO:0007669"/>
    <property type="project" value="UniProtKB-KW"/>
</dbReference>
<dbReference type="GO" id="GO:0003677">
    <property type="term" value="F:DNA binding"/>
    <property type="evidence" value="ECO:0007669"/>
    <property type="project" value="UniProtKB-UniRule"/>
</dbReference>
<dbReference type="GO" id="GO:0003899">
    <property type="term" value="F:DNA-directed RNA polymerase activity"/>
    <property type="evidence" value="ECO:0007669"/>
    <property type="project" value="UniProtKB-UniRule"/>
</dbReference>
<dbReference type="GO" id="GO:0046983">
    <property type="term" value="F:protein dimerization activity"/>
    <property type="evidence" value="ECO:0007669"/>
    <property type="project" value="InterPro"/>
</dbReference>
<dbReference type="GO" id="GO:0006351">
    <property type="term" value="P:DNA-templated transcription"/>
    <property type="evidence" value="ECO:0007669"/>
    <property type="project" value="UniProtKB-UniRule"/>
</dbReference>
<dbReference type="CDD" id="cd06928">
    <property type="entry name" value="RNAP_alpha_NTD"/>
    <property type="match status" value="1"/>
</dbReference>
<dbReference type="FunFam" id="1.10.150.20:FF:000001">
    <property type="entry name" value="DNA-directed RNA polymerase subunit alpha"/>
    <property type="match status" value="1"/>
</dbReference>
<dbReference type="FunFam" id="2.170.120.12:FF:000001">
    <property type="entry name" value="DNA-directed RNA polymerase subunit alpha"/>
    <property type="match status" value="1"/>
</dbReference>
<dbReference type="Gene3D" id="1.10.150.20">
    <property type="entry name" value="5' to 3' exonuclease, C-terminal subdomain"/>
    <property type="match status" value="1"/>
</dbReference>
<dbReference type="Gene3D" id="2.170.120.12">
    <property type="entry name" value="DNA-directed RNA polymerase, insert domain"/>
    <property type="match status" value="1"/>
</dbReference>
<dbReference type="Gene3D" id="3.30.1360.10">
    <property type="entry name" value="RNA polymerase, RBP11-like subunit"/>
    <property type="match status" value="1"/>
</dbReference>
<dbReference type="HAMAP" id="MF_00059">
    <property type="entry name" value="RNApol_bact_RpoA"/>
    <property type="match status" value="1"/>
</dbReference>
<dbReference type="InterPro" id="IPR011262">
    <property type="entry name" value="DNA-dir_RNA_pol_insert"/>
</dbReference>
<dbReference type="InterPro" id="IPR011263">
    <property type="entry name" value="DNA-dir_RNA_pol_RpoA/D/Rpb3"/>
</dbReference>
<dbReference type="InterPro" id="IPR011773">
    <property type="entry name" value="DNA-dir_RpoA"/>
</dbReference>
<dbReference type="InterPro" id="IPR036603">
    <property type="entry name" value="RBP11-like"/>
</dbReference>
<dbReference type="InterPro" id="IPR011260">
    <property type="entry name" value="RNAP_asu_C"/>
</dbReference>
<dbReference type="InterPro" id="IPR036643">
    <property type="entry name" value="RNApol_insert_sf"/>
</dbReference>
<dbReference type="NCBIfam" id="NF003513">
    <property type="entry name" value="PRK05182.1-2"/>
    <property type="match status" value="1"/>
</dbReference>
<dbReference type="NCBIfam" id="NF003519">
    <property type="entry name" value="PRK05182.2-5"/>
    <property type="match status" value="1"/>
</dbReference>
<dbReference type="NCBIfam" id="TIGR02027">
    <property type="entry name" value="rpoA"/>
    <property type="match status" value="1"/>
</dbReference>
<dbReference type="Pfam" id="PF01000">
    <property type="entry name" value="RNA_pol_A_bac"/>
    <property type="match status" value="1"/>
</dbReference>
<dbReference type="Pfam" id="PF03118">
    <property type="entry name" value="RNA_pol_A_CTD"/>
    <property type="match status" value="1"/>
</dbReference>
<dbReference type="Pfam" id="PF01193">
    <property type="entry name" value="RNA_pol_L"/>
    <property type="match status" value="1"/>
</dbReference>
<dbReference type="SMART" id="SM00662">
    <property type="entry name" value="RPOLD"/>
    <property type="match status" value="1"/>
</dbReference>
<dbReference type="SUPFAM" id="SSF47789">
    <property type="entry name" value="C-terminal domain of RNA polymerase alpha subunit"/>
    <property type="match status" value="1"/>
</dbReference>
<dbReference type="SUPFAM" id="SSF56553">
    <property type="entry name" value="Insert subdomain of RNA polymerase alpha subunit"/>
    <property type="match status" value="1"/>
</dbReference>
<dbReference type="SUPFAM" id="SSF55257">
    <property type="entry name" value="RBP11-like subunits of RNA polymerase"/>
    <property type="match status" value="1"/>
</dbReference>
<name>RPOA_THISH</name>
<reference key="1">
    <citation type="journal article" date="2011" name="Stand. Genomic Sci.">
        <title>Complete genome sequence of 'Thioalkalivibrio sulfidophilus' HL-EbGr7.</title>
        <authorList>
            <person name="Muyzer G."/>
            <person name="Sorokin D.Y."/>
            <person name="Mavromatis K."/>
            <person name="Lapidus A."/>
            <person name="Clum A."/>
            <person name="Ivanova N."/>
            <person name="Pati A."/>
            <person name="d'Haeseleer P."/>
            <person name="Woyke T."/>
            <person name="Kyrpides N.C."/>
        </authorList>
    </citation>
    <scope>NUCLEOTIDE SEQUENCE [LARGE SCALE GENOMIC DNA]</scope>
    <source>
        <strain>HL-EbGR7</strain>
    </source>
</reference>
<comment type="function">
    <text evidence="1">DNA-dependent RNA polymerase catalyzes the transcription of DNA into RNA using the four ribonucleoside triphosphates as substrates.</text>
</comment>
<comment type="catalytic activity">
    <reaction evidence="1">
        <text>RNA(n) + a ribonucleoside 5'-triphosphate = RNA(n+1) + diphosphate</text>
        <dbReference type="Rhea" id="RHEA:21248"/>
        <dbReference type="Rhea" id="RHEA-COMP:14527"/>
        <dbReference type="Rhea" id="RHEA-COMP:17342"/>
        <dbReference type="ChEBI" id="CHEBI:33019"/>
        <dbReference type="ChEBI" id="CHEBI:61557"/>
        <dbReference type="ChEBI" id="CHEBI:140395"/>
        <dbReference type="EC" id="2.7.7.6"/>
    </reaction>
</comment>
<comment type="subunit">
    <text evidence="1">Homodimer. The RNAP catalytic core consists of 2 alpha, 1 beta, 1 beta' and 1 omega subunit. When a sigma factor is associated with the core the holoenzyme is formed, which can initiate transcription.</text>
</comment>
<comment type="domain">
    <text evidence="1">The N-terminal domain is essential for RNAP assembly and basal transcription, whereas the C-terminal domain is involved in interaction with transcriptional regulators and with upstream promoter elements.</text>
</comment>
<comment type="similarity">
    <text evidence="1">Belongs to the RNA polymerase alpha chain family.</text>
</comment>
<protein>
    <recommendedName>
        <fullName evidence="1">DNA-directed RNA polymerase subunit alpha</fullName>
        <shortName evidence="1">RNAP subunit alpha</shortName>
        <ecNumber evidence="1">2.7.7.6</ecNumber>
    </recommendedName>
    <alternativeName>
        <fullName evidence="1">RNA polymerase subunit alpha</fullName>
    </alternativeName>
    <alternativeName>
        <fullName evidence="1">Transcriptase subunit alpha</fullName>
    </alternativeName>
</protein>
<gene>
    <name evidence="1" type="primary">rpoA</name>
    <name type="ordered locus">Tgr7_2299</name>
</gene>
<keyword id="KW-0240">DNA-directed RNA polymerase</keyword>
<keyword id="KW-0548">Nucleotidyltransferase</keyword>
<keyword id="KW-1185">Reference proteome</keyword>
<keyword id="KW-0804">Transcription</keyword>
<keyword id="KW-0808">Transferase</keyword>